<proteinExistence type="inferred from homology"/>
<dbReference type="EMBL" id="CP001283">
    <property type="protein sequence ID" value="ACK90455.1"/>
    <property type="molecule type" value="Genomic_DNA"/>
</dbReference>
<dbReference type="RefSeq" id="WP_000412056.1">
    <property type="nucleotide sequence ID" value="NC_011773.1"/>
</dbReference>
<dbReference type="SMR" id="B7JJE4"/>
<dbReference type="GeneID" id="93011037"/>
<dbReference type="KEGG" id="bcu:BCAH820_0038"/>
<dbReference type="HOGENOM" id="CLU_157169_0_0_9"/>
<dbReference type="Proteomes" id="UP000001363">
    <property type="component" value="Chromosome"/>
</dbReference>
<dbReference type="GO" id="GO:0009295">
    <property type="term" value="C:nucleoid"/>
    <property type="evidence" value="ECO:0007669"/>
    <property type="project" value="UniProtKB-SubCell"/>
</dbReference>
<dbReference type="GO" id="GO:0006260">
    <property type="term" value="P:DNA replication"/>
    <property type="evidence" value="ECO:0007669"/>
    <property type="project" value="UniProtKB-UniRule"/>
</dbReference>
<dbReference type="Gene3D" id="1.20.5.1160">
    <property type="entry name" value="Vasodilator-stimulated phosphoprotein"/>
    <property type="match status" value="1"/>
</dbReference>
<dbReference type="HAMAP" id="MF_01159">
    <property type="entry name" value="YabA"/>
    <property type="match status" value="1"/>
</dbReference>
<dbReference type="InterPro" id="IPR010377">
    <property type="entry name" value="YabA"/>
</dbReference>
<dbReference type="NCBIfam" id="NF009644">
    <property type="entry name" value="PRK13169.1-5"/>
    <property type="match status" value="1"/>
</dbReference>
<dbReference type="Pfam" id="PF06156">
    <property type="entry name" value="YabA"/>
    <property type="match status" value="1"/>
</dbReference>
<dbReference type="PIRSF" id="PIRSF021439">
    <property type="entry name" value="DUF972"/>
    <property type="match status" value="1"/>
</dbReference>
<evidence type="ECO:0000255" key="1">
    <source>
        <dbReference type="HAMAP-Rule" id="MF_01159"/>
    </source>
</evidence>
<comment type="function">
    <text evidence="1">Involved in control of chromosome replication initiation. Inhibits the cooperative binding of DnaA to the oriC region, thus negatively regulating initiation of chromosome replication. Inhibits the ability of DnaA-ATP to form a helix on DNA; does not disassemble preformed DnaA-DNA helices. Decreases the residence time of DnaA on the chromosome at its binding sites (oriC, replication forks and promoter-binding sites). Tethers DnaA to the replication machinery via the DNA polymerase beta sliding clamp subunit (dnaN). Associates with oriC and other DnaA targets on the chromosome in a DnaA-dependent manner.</text>
</comment>
<comment type="cofactor">
    <cofactor evidence="1">
        <name>Zn(2+)</name>
        <dbReference type="ChEBI" id="CHEBI:29105"/>
    </cofactor>
    <text evidence="1">Binds 1 zinc ion per subunit.</text>
</comment>
<comment type="subunit">
    <text evidence="1">Homotetramer. Interacts with both DnaA and DnaN, acting as a bridge between these two proteins.</text>
</comment>
<comment type="subcellular location">
    <subcellularLocation>
        <location evidence="1">Cytoplasm</location>
        <location evidence="1">Nucleoid</location>
    </subcellularLocation>
    <text evidence="1">Localizes in tight foci, which correspond to the replisome at mid-cell throughout the cell cycle.</text>
</comment>
<comment type="similarity">
    <text evidence="1">Belongs to the YabA family.</text>
</comment>
<gene>
    <name evidence="1" type="primary">yabA</name>
    <name type="ordered locus">BCAH820_0038</name>
</gene>
<name>YABA_BACC0</name>
<protein>
    <recommendedName>
        <fullName evidence="1">Replication initiation control protein YabA</fullName>
    </recommendedName>
</protein>
<accession>B7JJE4</accession>
<feature type="chain" id="PRO_1000137829" description="Replication initiation control protein YabA">
    <location>
        <begin position="1"/>
        <end position="116"/>
    </location>
</feature>
<feature type="binding site" evidence="1">
    <location>
        <position position="91"/>
    </location>
    <ligand>
        <name>Zn(2+)</name>
        <dbReference type="ChEBI" id="CHEBI:29105"/>
    </ligand>
</feature>
<feature type="binding site" evidence="1">
    <location>
        <position position="93"/>
    </location>
    <ligand>
        <name>Zn(2+)</name>
        <dbReference type="ChEBI" id="CHEBI:29105"/>
    </ligand>
</feature>
<feature type="binding site" evidence="1">
    <location>
        <position position="106"/>
    </location>
    <ligand>
        <name>Zn(2+)</name>
        <dbReference type="ChEBI" id="CHEBI:29105"/>
    </ligand>
</feature>
<feature type="binding site" evidence="1">
    <location>
        <position position="109"/>
    </location>
    <ligand>
        <name>Zn(2+)</name>
        <dbReference type="ChEBI" id="CHEBI:29105"/>
    </ligand>
</feature>
<sequence length="116" mass="13766">MEKKDIFASVSSMEEQIGHLYKQLGELKQHLAELLEENQHIKMENENLRHRFEEVQIKEKQKTQKRKEVKPKTDIGEGYDNLARLYQEGFHICNLHYGSVRKEGDCLFCLSFLNKK</sequence>
<organism>
    <name type="scientific">Bacillus cereus (strain AH820)</name>
    <dbReference type="NCBI Taxonomy" id="405535"/>
    <lineage>
        <taxon>Bacteria</taxon>
        <taxon>Bacillati</taxon>
        <taxon>Bacillota</taxon>
        <taxon>Bacilli</taxon>
        <taxon>Bacillales</taxon>
        <taxon>Bacillaceae</taxon>
        <taxon>Bacillus</taxon>
        <taxon>Bacillus cereus group</taxon>
    </lineage>
</organism>
<reference key="1">
    <citation type="submission" date="2008-10" db="EMBL/GenBank/DDBJ databases">
        <title>Genome sequence of Bacillus cereus AH820.</title>
        <authorList>
            <person name="Dodson R.J."/>
            <person name="Durkin A.S."/>
            <person name="Rosovitz M.J."/>
            <person name="Rasko D.A."/>
            <person name="Hoffmaster A."/>
            <person name="Ravel J."/>
            <person name="Sutton G."/>
        </authorList>
    </citation>
    <scope>NUCLEOTIDE SEQUENCE [LARGE SCALE GENOMIC DNA]</scope>
    <source>
        <strain>AH820</strain>
    </source>
</reference>
<keyword id="KW-0963">Cytoplasm</keyword>
<keyword id="KW-0235">DNA replication</keyword>
<keyword id="KW-0236">DNA replication inhibitor</keyword>
<keyword id="KW-0479">Metal-binding</keyword>
<keyword id="KW-0862">Zinc</keyword>